<dbReference type="EC" id="3.1.26.4" evidence="1"/>
<dbReference type="EMBL" id="CP000511">
    <property type="protein sequence ID" value="ABM13009.1"/>
    <property type="molecule type" value="Genomic_DNA"/>
</dbReference>
<dbReference type="RefSeq" id="WP_011779422.1">
    <property type="nucleotide sequence ID" value="NZ_JACKSD010000001.1"/>
</dbReference>
<dbReference type="SMR" id="A1T759"/>
<dbReference type="STRING" id="350058.Mvan_2194"/>
<dbReference type="KEGG" id="mva:Mvan_2194"/>
<dbReference type="eggNOG" id="COG0164">
    <property type="taxonomic scope" value="Bacteria"/>
</dbReference>
<dbReference type="HOGENOM" id="CLU_036532_1_0_11"/>
<dbReference type="Proteomes" id="UP000009159">
    <property type="component" value="Chromosome"/>
</dbReference>
<dbReference type="GO" id="GO:0005737">
    <property type="term" value="C:cytoplasm"/>
    <property type="evidence" value="ECO:0007669"/>
    <property type="project" value="UniProtKB-SubCell"/>
</dbReference>
<dbReference type="GO" id="GO:0032299">
    <property type="term" value="C:ribonuclease H2 complex"/>
    <property type="evidence" value="ECO:0007669"/>
    <property type="project" value="TreeGrafter"/>
</dbReference>
<dbReference type="GO" id="GO:0030145">
    <property type="term" value="F:manganese ion binding"/>
    <property type="evidence" value="ECO:0007669"/>
    <property type="project" value="UniProtKB-UniRule"/>
</dbReference>
<dbReference type="GO" id="GO:0003723">
    <property type="term" value="F:RNA binding"/>
    <property type="evidence" value="ECO:0007669"/>
    <property type="project" value="InterPro"/>
</dbReference>
<dbReference type="GO" id="GO:0004523">
    <property type="term" value="F:RNA-DNA hybrid ribonuclease activity"/>
    <property type="evidence" value="ECO:0007669"/>
    <property type="project" value="UniProtKB-UniRule"/>
</dbReference>
<dbReference type="GO" id="GO:0043137">
    <property type="term" value="P:DNA replication, removal of RNA primer"/>
    <property type="evidence" value="ECO:0007669"/>
    <property type="project" value="TreeGrafter"/>
</dbReference>
<dbReference type="GO" id="GO:0006298">
    <property type="term" value="P:mismatch repair"/>
    <property type="evidence" value="ECO:0007669"/>
    <property type="project" value="TreeGrafter"/>
</dbReference>
<dbReference type="CDD" id="cd07182">
    <property type="entry name" value="RNase_HII_bacteria_HII_like"/>
    <property type="match status" value="1"/>
</dbReference>
<dbReference type="FunFam" id="3.30.420.10:FF:000113">
    <property type="entry name" value="Ribonuclease HII"/>
    <property type="match status" value="1"/>
</dbReference>
<dbReference type="Gene3D" id="3.30.420.10">
    <property type="entry name" value="Ribonuclease H-like superfamily/Ribonuclease H"/>
    <property type="match status" value="1"/>
</dbReference>
<dbReference type="HAMAP" id="MF_00052_B">
    <property type="entry name" value="RNase_HII_B"/>
    <property type="match status" value="1"/>
</dbReference>
<dbReference type="InterPro" id="IPR022898">
    <property type="entry name" value="RNase_HII"/>
</dbReference>
<dbReference type="InterPro" id="IPR001352">
    <property type="entry name" value="RNase_HII/HIII"/>
</dbReference>
<dbReference type="InterPro" id="IPR024567">
    <property type="entry name" value="RNase_HII/HIII_dom"/>
</dbReference>
<dbReference type="InterPro" id="IPR012337">
    <property type="entry name" value="RNaseH-like_sf"/>
</dbReference>
<dbReference type="InterPro" id="IPR036397">
    <property type="entry name" value="RNaseH_sf"/>
</dbReference>
<dbReference type="NCBIfam" id="NF000595">
    <property type="entry name" value="PRK00015.1-3"/>
    <property type="match status" value="1"/>
</dbReference>
<dbReference type="NCBIfam" id="NF000598">
    <property type="entry name" value="PRK00015.2-2"/>
    <property type="match status" value="1"/>
</dbReference>
<dbReference type="NCBIfam" id="NF000600">
    <property type="entry name" value="PRK00015.2-4"/>
    <property type="match status" value="1"/>
</dbReference>
<dbReference type="PANTHER" id="PTHR10954">
    <property type="entry name" value="RIBONUCLEASE H2 SUBUNIT A"/>
    <property type="match status" value="1"/>
</dbReference>
<dbReference type="PANTHER" id="PTHR10954:SF18">
    <property type="entry name" value="RIBONUCLEASE HII"/>
    <property type="match status" value="1"/>
</dbReference>
<dbReference type="Pfam" id="PF01351">
    <property type="entry name" value="RNase_HII"/>
    <property type="match status" value="1"/>
</dbReference>
<dbReference type="SUPFAM" id="SSF53098">
    <property type="entry name" value="Ribonuclease H-like"/>
    <property type="match status" value="1"/>
</dbReference>
<dbReference type="PROSITE" id="PS51975">
    <property type="entry name" value="RNASE_H_2"/>
    <property type="match status" value="1"/>
</dbReference>
<comment type="function">
    <text evidence="1">Endonuclease that specifically degrades the RNA of RNA-DNA hybrids.</text>
</comment>
<comment type="catalytic activity">
    <reaction evidence="1">
        <text>Endonucleolytic cleavage to 5'-phosphomonoester.</text>
        <dbReference type="EC" id="3.1.26.4"/>
    </reaction>
</comment>
<comment type="cofactor">
    <cofactor evidence="1">
        <name>Mn(2+)</name>
        <dbReference type="ChEBI" id="CHEBI:29035"/>
    </cofactor>
    <cofactor evidence="1">
        <name>Mg(2+)</name>
        <dbReference type="ChEBI" id="CHEBI:18420"/>
    </cofactor>
    <text evidence="1">Manganese or magnesium. Binds 1 divalent metal ion per monomer in the absence of substrate. May bind a second metal ion after substrate binding.</text>
</comment>
<comment type="subcellular location">
    <subcellularLocation>
        <location evidence="1">Cytoplasm</location>
    </subcellularLocation>
</comment>
<comment type="similarity">
    <text evidence="1">Belongs to the RNase HII family.</text>
</comment>
<gene>
    <name evidence="1" type="primary">rnhB</name>
    <name type="ordered locus">Mvan_2194</name>
</gene>
<sequence>MPAAWPPRTVIRKSSGLRTLESALYRAGLGPVAGVDEVGRGACAGPLVVAACVLGPNRLESLAALDDSKKLNENERERLFPLIRRYALAYHVVFIPSQEVDRRGVHVANIEGMRRAVAGLSLRPGYVLSDGFRVPGLPMPSLPVVGGDAAAACIAAASVLAKVSRDRLMVAMEDEHPGYGFAEHKGYSTRAHSAALARLGPSSQHRYSFINVRRLVMDGEPEEHGEVGCGKMLVDMPVDGVLHEGQLSR</sequence>
<evidence type="ECO:0000255" key="1">
    <source>
        <dbReference type="HAMAP-Rule" id="MF_00052"/>
    </source>
</evidence>
<evidence type="ECO:0000255" key="2">
    <source>
        <dbReference type="PROSITE-ProRule" id="PRU01319"/>
    </source>
</evidence>
<proteinExistence type="inferred from homology"/>
<feature type="chain" id="PRO_1000031170" description="Ribonuclease HII">
    <location>
        <begin position="1"/>
        <end position="249"/>
    </location>
</feature>
<feature type="domain" description="RNase H type-2" evidence="2">
    <location>
        <begin position="30"/>
        <end position="221"/>
    </location>
</feature>
<feature type="binding site" evidence="1">
    <location>
        <position position="36"/>
    </location>
    <ligand>
        <name>a divalent metal cation</name>
        <dbReference type="ChEBI" id="CHEBI:60240"/>
    </ligand>
</feature>
<feature type="binding site" evidence="1">
    <location>
        <position position="37"/>
    </location>
    <ligand>
        <name>a divalent metal cation</name>
        <dbReference type="ChEBI" id="CHEBI:60240"/>
    </ligand>
</feature>
<feature type="binding site" evidence="1">
    <location>
        <position position="130"/>
    </location>
    <ligand>
        <name>a divalent metal cation</name>
        <dbReference type="ChEBI" id="CHEBI:60240"/>
    </ligand>
</feature>
<organism>
    <name type="scientific">Mycolicibacterium vanbaalenii (strain DSM 7251 / JCM 13017 / BCRC 16820 / KCTC 9966 / NRRL B-24157 / PYR-1)</name>
    <name type="common">Mycobacterium vanbaalenii</name>
    <dbReference type="NCBI Taxonomy" id="350058"/>
    <lineage>
        <taxon>Bacteria</taxon>
        <taxon>Bacillati</taxon>
        <taxon>Actinomycetota</taxon>
        <taxon>Actinomycetes</taxon>
        <taxon>Mycobacteriales</taxon>
        <taxon>Mycobacteriaceae</taxon>
        <taxon>Mycolicibacterium</taxon>
    </lineage>
</organism>
<name>RNH2_MYCVP</name>
<keyword id="KW-0963">Cytoplasm</keyword>
<keyword id="KW-0255">Endonuclease</keyword>
<keyword id="KW-0378">Hydrolase</keyword>
<keyword id="KW-0464">Manganese</keyword>
<keyword id="KW-0479">Metal-binding</keyword>
<keyword id="KW-0540">Nuclease</keyword>
<reference key="1">
    <citation type="submission" date="2006-12" db="EMBL/GenBank/DDBJ databases">
        <title>Complete sequence of Mycobacterium vanbaalenii PYR-1.</title>
        <authorList>
            <consortium name="US DOE Joint Genome Institute"/>
            <person name="Copeland A."/>
            <person name="Lucas S."/>
            <person name="Lapidus A."/>
            <person name="Barry K."/>
            <person name="Detter J.C."/>
            <person name="Glavina del Rio T."/>
            <person name="Hammon N."/>
            <person name="Israni S."/>
            <person name="Dalin E."/>
            <person name="Tice H."/>
            <person name="Pitluck S."/>
            <person name="Singan V."/>
            <person name="Schmutz J."/>
            <person name="Larimer F."/>
            <person name="Land M."/>
            <person name="Hauser L."/>
            <person name="Kyrpides N."/>
            <person name="Anderson I.J."/>
            <person name="Miller C."/>
            <person name="Richardson P."/>
        </authorList>
    </citation>
    <scope>NUCLEOTIDE SEQUENCE [LARGE SCALE GENOMIC DNA]</scope>
    <source>
        <strain>DSM 7251 / JCM 13017 / BCRC 16820 / KCTC 9966 / NRRL B-24157 / PYR-1</strain>
    </source>
</reference>
<protein>
    <recommendedName>
        <fullName evidence="1">Ribonuclease HII</fullName>
        <shortName evidence="1">RNase HII</shortName>
        <ecNumber evidence="1">3.1.26.4</ecNumber>
    </recommendedName>
</protein>
<accession>A1T759</accession>